<reference key="1">
    <citation type="submission" date="2007-11" db="EMBL/GenBank/DDBJ databases">
        <title>Genome sequencing of phylogenetically and phenotypically diverse Coxiella burnetii isolates.</title>
        <authorList>
            <person name="Seshadri R."/>
            <person name="Samuel J.E."/>
        </authorList>
    </citation>
    <scope>NUCLEOTIDE SEQUENCE [LARGE SCALE GENOMIC DNA]</scope>
    <source>
        <strain>RSA 331 / Henzerling II</strain>
    </source>
</reference>
<accession>A9NC99</accession>
<evidence type="ECO:0000255" key="1">
    <source>
        <dbReference type="HAMAP-Rule" id="MF_00406"/>
    </source>
</evidence>
<sequence>MNITDIKKYIPHRYPFLLIDRVIKIEKDKSLVAIKNVTVNEPFFTGHFPVRPVMPGVLIIESLAQAAGILIVKSLNLPEGHKDIYFFAGVDNARFKRVVEPGDQLTLEVKVLKVHRGLWKFEGKATVDDQLACKAELMTIKG</sequence>
<organism>
    <name type="scientific">Coxiella burnetii (strain RSA 331 / Henzerling II)</name>
    <dbReference type="NCBI Taxonomy" id="360115"/>
    <lineage>
        <taxon>Bacteria</taxon>
        <taxon>Pseudomonadati</taxon>
        <taxon>Pseudomonadota</taxon>
        <taxon>Gammaproteobacteria</taxon>
        <taxon>Legionellales</taxon>
        <taxon>Coxiellaceae</taxon>
        <taxon>Coxiella</taxon>
    </lineage>
</organism>
<gene>
    <name evidence="1" type="primary">fabZ</name>
    <name type="ordered locus">COXBURSA331_A0727</name>
</gene>
<feature type="chain" id="PRO_0000340772" description="3-hydroxyacyl-[acyl-carrier-protein] dehydratase FabZ">
    <location>
        <begin position="1"/>
        <end position="142"/>
    </location>
</feature>
<feature type="active site" evidence="1">
    <location>
        <position position="47"/>
    </location>
</feature>
<protein>
    <recommendedName>
        <fullName evidence="1">3-hydroxyacyl-[acyl-carrier-protein] dehydratase FabZ</fullName>
        <ecNumber evidence="1">4.2.1.59</ecNumber>
    </recommendedName>
    <alternativeName>
        <fullName evidence="1">(3R)-hydroxymyristoyl-[acyl-carrier-protein] dehydratase</fullName>
        <shortName evidence="1">(3R)-hydroxymyristoyl-ACP dehydrase</shortName>
    </alternativeName>
    <alternativeName>
        <fullName evidence="1">Beta-hydroxyacyl-ACP dehydratase</fullName>
    </alternativeName>
</protein>
<dbReference type="EC" id="4.2.1.59" evidence="1"/>
<dbReference type="EMBL" id="CP000890">
    <property type="protein sequence ID" value="ABX78615.1"/>
    <property type="molecule type" value="Genomic_DNA"/>
</dbReference>
<dbReference type="SMR" id="A9NC99"/>
<dbReference type="KEGG" id="cbs:COXBURSA331_A0727"/>
<dbReference type="HOGENOM" id="CLU_078912_1_0_6"/>
<dbReference type="GO" id="GO:0005737">
    <property type="term" value="C:cytoplasm"/>
    <property type="evidence" value="ECO:0007669"/>
    <property type="project" value="UniProtKB-SubCell"/>
</dbReference>
<dbReference type="GO" id="GO:0016020">
    <property type="term" value="C:membrane"/>
    <property type="evidence" value="ECO:0007669"/>
    <property type="project" value="GOC"/>
</dbReference>
<dbReference type="GO" id="GO:0019171">
    <property type="term" value="F:(3R)-hydroxyacyl-[acyl-carrier-protein] dehydratase activity"/>
    <property type="evidence" value="ECO:0007669"/>
    <property type="project" value="UniProtKB-EC"/>
</dbReference>
<dbReference type="GO" id="GO:0006633">
    <property type="term" value="P:fatty acid biosynthetic process"/>
    <property type="evidence" value="ECO:0007669"/>
    <property type="project" value="UniProtKB-UniRule"/>
</dbReference>
<dbReference type="GO" id="GO:0009245">
    <property type="term" value="P:lipid A biosynthetic process"/>
    <property type="evidence" value="ECO:0007669"/>
    <property type="project" value="UniProtKB-UniRule"/>
</dbReference>
<dbReference type="CDD" id="cd01288">
    <property type="entry name" value="FabZ"/>
    <property type="match status" value="1"/>
</dbReference>
<dbReference type="FunFam" id="3.10.129.10:FF:000001">
    <property type="entry name" value="3-hydroxyacyl-[acyl-carrier-protein] dehydratase FabZ"/>
    <property type="match status" value="1"/>
</dbReference>
<dbReference type="Gene3D" id="3.10.129.10">
    <property type="entry name" value="Hotdog Thioesterase"/>
    <property type="match status" value="1"/>
</dbReference>
<dbReference type="HAMAP" id="MF_00406">
    <property type="entry name" value="FabZ"/>
    <property type="match status" value="1"/>
</dbReference>
<dbReference type="InterPro" id="IPR013114">
    <property type="entry name" value="FabA_FabZ"/>
</dbReference>
<dbReference type="InterPro" id="IPR010084">
    <property type="entry name" value="FabZ"/>
</dbReference>
<dbReference type="InterPro" id="IPR029069">
    <property type="entry name" value="HotDog_dom_sf"/>
</dbReference>
<dbReference type="NCBIfam" id="TIGR01750">
    <property type="entry name" value="fabZ"/>
    <property type="match status" value="1"/>
</dbReference>
<dbReference type="NCBIfam" id="NF000582">
    <property type="entry name" value="PRK00006.1"/>
    <property type="match status" value="1"/>
</dbReference>
<dbReference type="PANTHER" id="PTHR30272">
    <property type="entry name" value="3-HYDROXYACYL-[ACYL-CARRIER-PROTEIN] DEHYDRATASE"/>
    <property type="match status" value="1"/>
</dbReference>
<dbReference type="PANTHER" id="PTHR30272:SF1">
    <property type="entry name" value="3-HYDROXYACYL-[ACYL-CARRIER-PROTEIN] DEHYDRATASE"/>
    <property type="match status" value="1"/>
</dbReference>
<dbReference type="Pfam" id="PF07977">
    <property type="entry name" value="FabA"/>
    <property type="match status" value="1"/>
</dbReference>
<dbReference type="SUPFAM" id="SSF54637">
    <property type="entry name" value="Thioesterase/thiol ester dehydrase-isomerase"/>
    <property type="match status" value="1"/>
</dbReference>
<comment type="function">
    <text evidence="1">Involved in unsaturated fatty acids biosynthesis. Catalyzes the dehydration of short chain beta-hydroxyacyl-ACPs and long chain saturated and unsaturated beta-hydroxyacyl-ACPs.</text>
</comment>
<comment type="catalytic activity">
    <reaction evidence="1">
        <text>a (3R)-hydroxyacyl-[ACP] = a (2E)-enoyl-[ACP] + H2O</text>
        <dbReference type="Rhea" id="RHEA:13097"/>
        <dbReference type="Rhea" id="RHEA-COMP:9925"/>
        <dbReference type="Rhea" id="RHEA-COMP:9945"/>
        <dbReference type="ChEBI" id="CHEBI:15377"/>
        <dbReference type="ChEBI" id="CHEBI:78784"/>
        <dbReference type="ChEBI" id="CHEBI:78827"/>
        <dbReference type="EC" id="4.2.1.59"/>
    </reaction>
</comment>
<comment type="subcellular location">
    <subcellularLocation>
        <location evidence="1">Cytoplasm</location>
    </subcellularLocation>
</comment>
<comment type="similarity">
    <text evidence="1">Belongs to the thioester dehydratase family. FabZ subfamily.</text>
</comment>
<keyword id="KW-0963">Cytoplasm</keyword>
<keyword id="KW-0441">Lipid A biosynthesis</keyword>
<keyword id="KW-0444">Lipid biosynthesis</keyword>
<keyword id="KW-0443">Lipid metabolism</keyword>
<keyword id="KW-0456">Lyase</keyword>
<proteinExistence type="inferred from homology"/>
<name>FABZ_COXBR</name>